<accession>A4ZUB2</accession>
<dbReference type="EMBL" id="EF432053">
    <property type="protein sequence ID" value="ABP73416.1"/>
    <property type="molecule type" value="Genomic_DNA"/>
</dbReference>
<dbReference type="RefSeq" id="YP_001210330.1">
    <property type="nucleotide sequence ID" value="NC_009452.1"/>
</dbReference>
<dbReference type="GeneID" id="5129802"/>
<dbReference type="KEGG" id="vg:5129802"/>
<dbReference type="Proteomes" id="UP000000513">
    <property type="component" value="Segment"/>
</dbReference>
<name>Y170_ABVP</name>
<feature type="chain" id="PRO_0000384863" description="Uncharacterized protein ORF170">
    <location>
        <begin position="1"/>
        <end position="170"/>
    </location>
</feature>
<keyword id="KW-1185">Reference proteome</keyword>
<reference key="1">
    <citation type="journal article" date="2007" name="Virology">
        <title>Genome of the Acidianus bottle-shaped virus and insights into the replication and packaging mechanisms.</title>
        <authorList>
            <person name="Peng X."/>
            <person name="Basta T."/>
            <person name="Haring M."/>
            <person name="Garrett R.A."/>
            <person name="Prangishvili D."/>
        </authorList>
    </citation>
    <scope>NUCLEOTIDE SEQUENCE [GENOMIC DNA]</scope>
</reference>
<organism>
    <name type="scientific">Acidianus bottle-shaped virus (isolate Italy/Pozzuoli)</name>
    <name type="common">ABV</name>
    <dbReference type="NCBI Taxonomy" id="654911"/>
    <lineage>
        <taxon>Viruses</taxon>
        <taxon>Viruses incertae sedis</taxon>
        <taxon>Ampullaviridae</taxon>
        <taxon>Bottigliavirus</taxon>
        <taxon>Bottigliavirus ABV</taxon>
    </lineage>
</organism>
<sequence length="170" mass="19415">MSNTSFALRFSPRIARFLGNAYAPSYSAKNTFAPANSRLTNSVYAPGVAIGNTYAPATGRVSFNAYSPSYSSRSNYSPSTDLATDTKYSPFYEGKLNYSPRLWYSNDYNPFAYISKRRVYAPFDYYDFARKIDYAPTDIYVKMPKIKIDDSALRYLADYNRFIVNLLRVL</sequence>
<organismHost>
    <name type="scientific">Acidianus convivator</name>
    <dbReference type="NCBI Taxonomy" id="269667"/>
</organismHost>
<proteinExistence type="predicted"/>
<protein>
    <recommendedName>
        <fullName>Uncharacterized protein ORF170</fullName>
    </recommendedName>
</protein>
<gene>
    <name type="ORF">ORF170</name>
</gene>